<proteinExistence type="inferred from homology"/>
<sequence>MAHGEPYYSSKPDKDFNFGSTMARRQMTPTMVTKLPKFVRNSPQVYDWIVRGLIFPTTGKTYFQRVVVITGGFEDGTYGSFAFDGREWVEIYPIEHLNLMSSLKLIHKANALQERLRLSQEEKATLTLDVQFLQHENVRLKELISKPEPRKIQMKWIIVGAVLTFLSLIPGGYAQSQTNNTIFTDVIAACKYSTETLTENLDLRIKLALANITISDKLDAVRQILNFAFVPRSHWLRTVFYYIHYYEMWNIFMFVLAIGTVMRSTRPGTDLITLATSHLSGFRMAVLPTIPFHTTMTLWVMNTLMVCYYFDNLLAITMAILAPILGIIFLCFMEDSNYVSQIRGLIATAVLIAGGHACLTLTGTTTSLFVVILTCRFVRMATIFIGTRFEIRDANGKVVATVPTRIKNAAFDFFQRLKQSGVRVGVNEFVVIKPGALCVIDTPEGKGTGFFSGNDIVTAAHVVGNNTFVNVCYEGLMYEAKVRYMPEKDIAFITCPGDLHPTARLKLSKNPDYSCVTVMAYVNEDLVVSTAAAMVHGNTLSYAVRTQDGMSGAPVCDKYGRVLAVHQTNTGYTGGAVIIDPADFHPVKAPSQVELLKEEIERLKAQLNSAAENPSTVITQQPTATLEQKSVNDSDVVDLVRTAMEREMKILRDEINGILAPFLQKKKGKTKHGRGRVRRNLRKGVKLLTEEEYRELLEKGLDRETFLDLIDRIIGERSGYPDYDDEDYYDEDDDGWGMVGDDVEFDYTEVINFDQAKPTPAPRTTKPKPCPEPEAETQPLDLSQKKDKQLEHEQQVVKPTKPQKNDPQPYSQTYGKAPIWESYDFDWDEDDAKFILPAPPRLTKADEIVLGSKIVKLRTIIETAIKTQNYSALPEAVFELDKAAYEAGLEGFLQRVKSKNKAPKKLQRAPEDQGAQNYHSLDAWKSLLEPPRERRCVPANFPLLGHLPIDRPIFDDKKPRDDLLGLLPEPTWHAFEEYGPTTWGPQAFIKSFDKFFYAEPIDFFSEYPQLCAFADWATYREFRYLEDTRVIHITATEKNTDSTPAYPKMNYFDTEEKYLESYGWAPYIREFTRVFKGDKPEVLWYLFLKKEIIKEEKIRNSDIRQIVCADPIYTRIGACLEAHQNALMKQHTETSVGQCGWSPMEGGFKKTMQRLVNKGNKYFIEFDWTRYDGTIPPSLFRHIKEIRWNFINKDQREKYRHVHEWYVDNLLNRHVLLPSGEVTLQTRGNPSGQFSTTMDNNMINFWLQAFEFAYFNGPNKDLWKTYDTVVYGDDRLSTTPSVPENYEERVIDMYRDIFGMWVKPGKVICRESIVGLSFCGFTVNADLEPVPTSPEKLMASLLKPYKILPDLESLHGKLLCYQLLAAFMAEDHPFKVYVEHCLSRTAKQLRDSGLPARLTEEQLHRIWRGGPKKCDG</sequence>
<keyword id="KW-0067">ATP-binding</keyword>
<keyword id="KW-0175">Coiled coil</keyword>
<keyword id="KW-0191">Covalent protein-RNA linkage</keyword>
<keyword id="KW-1043">Host membrane</keyword>
<keyword id="KW-0378">Hydrolase</keyword>
<keyword id="KW-0472">Membrane</keyword>
<keyword id="KW-0547">Nucleotide-binding</keyword>
<keyword id="KW-0548">Nucleotidyltransferase</keyword>
<keyword id="KW-0597">Phosphoprotein</keyword>
<keyword id="KW-0645">Protease</keyword>
<keyword id="KW-0688">Ribosomal frameshifting</keyword>
<keyword id="KW-0696">RNA-directed RNA polymerase</keyword>
<keyword id="KW-0720">Serine protease</keyword>
<keyword id="KW-0808">Transferase</keyword>
<keyword id="KW-0812">Transmembrane</keyword>
<keyword id="KW-1133">Transmembrane helix</keyword>
<keyword id="KW-0693">Viral RNA replication</keyword>
<reference key="1">
    <citation type="journal article" date="2006" name="Arch. Virol.">
        <title>Molecular characterization of human astroviruses isolated in Brazil, including the complete sequences of astrovirus genotypes 4 and 5.</title>
        <authorList>
            <person name="Silva P.A."/>
            <person name="Cardoso D.D."/>
            <person name="Schreier E."/>
        </authorList>
    </citation>
    <scope>NUCLEOTIDE SEQUENCE [GENOMIC RNA]</scope>
    <source>
        <strain>Goiania/GO/12/94/Brazil</strain>
    </source>
</reference>
<organismHost>
    <name type="scientific">Homo sapiens</name>
    <name type="common">Human</name>
    <dbReference type="NCBI Taxonomy" id="9606"/>
</organismHost>
<evidence type="ECO:0000250" key="1"/>
<evidence type="ECO:0000250" key="2">
    <source>
        <dbReference type="UniProtKB" id="P0C6K4"/>
    </source>
</evidence>
<evidence type="ECO:0000250" key="3">
    <source>
        <dbReference type="UniProtKB" id="Q3ZN07"/>
    </source>
</evidence>
<evidence type="ECO:0000255" key="4"/>
<evidence type="ECO:0000255" key="5">
    <source>
        <dbReference type="PROSITE-ProRule" id="PRU00539"/>
    </source>
</evidence>
<evidence type="ECO:0000256" key="6">
    <source>
        <dbReference type="SAM" id="MobiDB-lite"/>
    </source>
</evidence>
<evidence type="ECO:0000305" key="7"/>
<gene>
    <name type="primary">ORF1</name>
</gene>
<organism>
    <name type="scientific">Human astrovirus-5</name>
    <name type="common">HAstV-5</name>
    <dbReference type="NCBI Taxonomy" id="35741"/>
    <lineage>
        <taxon>Viruses</taxon>
        <taxon>Riboviria</taxon>
        <taxon>Orthornavirae</taxon>
        <taxon>Pisuviricota</taxon>
        <taxon>Stelpaviricetes</taxon>
        <taxon>Stellavirales</taxon>
        <taxon>Astroviridae</taxon>
        <taxon>Mamastrovirus</taxon>
        <taxon>Mamastrovirus 1</taxon>
    </lineage>
</organism>
<protein>
    <recommendedName>
        <fullName>Non-structural polyprotein 1AB</fullName>
    </recommendedName>
    <component>
        <recommendedName>
            <fullName>Protein p19</fullName>
        </recommendedName>
    </component>
    <component>
        <recommendedName>
            <fullName>Transmembrane protein 1A</fullName>
        </recommendedName>
    </component>
    <component>
        <recommendedName>
            <fullName>Serine protease p27</fullName>
            <shortName>p27</shortName>
            <ecNumber evidence="2">3.4.21.-</ecNumber>
        </recommendedName>
    </component>
    <component>
        <recommendedName>
            <fullName>Viral genome-linked protein</fullName>
        </recommendedName>
        <alternativeName>
            <fullName>VPg</fullName>
        </alternativeName>
    </component>
    <component>
        <recommendedName>
            <fullName>Protein p20</fullName>
        </recommendedName>
    </component>
    <component>
        <recommendedName>
            <fullName>RNA-directed RNA polymerase p57</fullName>
            <shortName>p57</shortName>
            <ecNumber>2.7.7.48</ecNumber>
        </recommendedName>
    </component>
</protein>
<name>NS1AB_HASV5</name>
<feature type="chain" id="PRO_0000327283" description="Non-structural polyprotein 1AB">
    <location>
        <begin position="1"/>
        <end position="1416"/>
    </location>
</feature>
<feature type="chain" id="PRO_0000327284" description="Protein p19" evidence="4">
    <location>
        <begin position="1"/>
        <end position="175"/>
    </location>
</feature>
<feature type="chain" id="PRO_0000327285" description="Transmembrane protein 1A" evidence="4">
    <location>
        <begin position="176"/>
        <end position="419"/>
    </location>
</feature>
<feature type="chain" id="PRO_0000327286" description="Serine protease p27" evidence="4">
    <location>
        <begin position="420"/>
        <end position="664"/>
    </location>
</feature>
<feature type="chain" id="PRO_0000419588" description="Viral genome-linked protein" evidence="4">
    <location>
        <begin position="665"/>
        <end position="755"/>
    </location>
</feature>
<feature type="chain" id="PRO_0000327287" description="Protein p20" evidence="4">
    <location>
        <begin position="756"/>
        <end position="913"/>
    </location>
</feature>
<feature type="chain" id="PRO_0000327288" description="RNA-directed RNA polymerase p57" evidence="4">
    <location>
        <begin position="914"/>
        <end position="1416"/>
    </location>
</feature>
<feature type="transmembrane region" description="Helical" evidence="4">
    <location>
        <begin position="154"/>
        <end position="174"/>
    </location>
</feature>
<feature type="transmembrane region" description="Helical" evidence="4">
    <location>
        <begin position="239"/>
        <end position="259"/>
    </location>
</feature>
<feature type="transmembrane region" description="Helical" evidence="4">
    <location>
        <begin position="286"/>
        <end position="306"/>
    </location>
</feature>
<feature type="transmembrane region" description="Helical" evidence="4">
    <location>
        <begin position="313"/>
        <end position="333"/>
    </location>
</feature>
<feature type="transmembrane region" description="Helical" evidence="4">
    <location>
        <begin position="344"/>
        <end position="364"/>
    </location>
</feature>
<feature type="domain" description="RdRp catalytic" evidence="5">
    <location>
        <begin position="1161"/>
        <end position="1287"/>
    </location>
</feature>
<feature type="region of interest" description="Disordered" evidence="6">
    <location>
        <begin position="752"/>
        <end position="815"/>
    </location>
</feature>
<feature type="coiled-coil region" evidence="4">
    <location>
        <begin position="104"/>
        <end position="146"/>
    </location>
</feature>
<feature type="coiled-coil region" evidence="4">
    <location>
        <begin position="587"/>
        <end position="614"/>
    </location>
</feature>
<feature type="compositionally biased region" description="Basic and acidic residues" evidence="6">
    <location>
        <begin position="783"/>
        <end position="795"/>
    </location>
</feature>
<feature type="compositionally biased region" description="Polar residues" evidence="6">
    <location>
        <begin position="805"/>
        <end position="814"/>
    </location>
</feature>
<feature type="active site" description="Charge relay system; for serine protease activity" evidence="1">
    <location>
        <position position="461"/>
    </location>
</feature>
<feature type="active site" description="Charge relay system; for serine protease activity" evidence="1">
    <location>
        <position position="489"/>
    </location>
</feature>
<feature type="active site" description="Charge relay system; for serine protease activity" evidence="1">
    <location>
        <position position="551"/>
    </location>
</feature>
<feature type="site" description="Cleavage" evidence="4">
    <location>
        <begin position="175"/>
        <end position="176"/>
    </location>
</feature>
<feature type="site" description="Cleavage" evidence="4">
    <location>
        <begin position="419"/>
        <end position="420"/>
    </location>
</feature>
<feature type="site" description="Cleavage" evidence="2">
    <location>
        <begin position="664"/>
        <end position="665"/>
    </location>
</feature>
<feature type="site" description="Cleavage" evidence="4">
    <location>
        <begin position="755"/>
        <end position="756"/>
    </location>
</feature>
<feature type="site" description="Cleavage" evidence="4">
    <location>
        <begin position="913"/>
        <end position="914"/>
    </location>
</feature>
<feature type="modified residue" description="O-(5'-phospho-RNA)-tyrosine" evidence="3">
    <location>
        <position position="693"/>
    </location>
</feature>
<dbReference type="EC" id="3.4.21.-" evidence="2"/>
<dbReference type="EC" id="2.7.7.48"/>
<dbReference type="EMBL" id="DQ028633">
    <property type="protein sequence ID" value="AAY46273.1"/>
    <property type="status" value="ALT_SEQ"/>
    <property type="molecule type" value="Genomic_RNA"/>
</dbReference>
<dbReference type="SMR" id="Q4TWH8"/>
<dbReference type="IntAct" id="Q4TWH8">
    <property type="interactions" value="1"/>
</dbReference>
<dbReference type="Proteomes" id="UP000008628">
    <property type="component" value="Genome"/>
</dbReference>
<dbReference type="GO" id="GO:0033644">
    <property type="term" value="C:host cell membrane"/>
    <property type="evidence" value="ECO:0007669"/>
    <property type="project" value="UniProtKB-SubCell"/>
</dbReference>
<dbReference type="GO" id="GO:0016020">
    <property type="term" value="C:membrane"/>
    <property type="evidence" value="ECO:0007669"/>
    <property type="project" value="UniProtKB-KW"/>
</dbReference>
<dbReference type="GO" id="GO:0005524">
    <property type="term" value="F:ATP binding"/>
    <property type="evidence" value="ECO:0007669"/>
    <property type="project" value="UniProtKB-KW"/>
</dbReference>
<dbReference type="GO" id="GO:0003723">
    <property type="term" value="F:RNA binding"/>
    <property type="evidence" value="ECO:0007669"/>
    <property type="project" value="InterPro"/>
</dbReference>
<dbReference type="GO" id="GO:0003968">
    <property type="term" value="F:RNA-directed RNA polymerase activity"/>
    <property type="evidence" value="ECO:0007669"/>
    <property type="project" value="UniProtKB-KW"/>
</dbReference>
<dbReference type="GO" id="GO:0004252">
    <property type="term" value="F:serine-type endopeptidase activity"/>
    <property type="evidence" value="ECO:0007669"/>
    <property type="project" value="InterPro"/>
</dbReference>
<dbReference type="GO" id="GO:0070008">
    <property type="term" value="F:serine-type exopeptidase activity"/>
    <property type="evidence" value="ECO:0007669"/>
    <property type="project" value="InterPro"/>
</dbReference>
<dbReference type="GO" id="GO:0006351">
    <property type="term" value="P:DNA-templated transcription"/>
    <property type="evidence" value="ECO:0007669"/>
    <property type="project" value="InterPro"/>
</dbReference>
<dbReference type="GO" id="GO:0006508">
    <property type="term" value="P:proteolysis"/>
    <property type="evidence" value="ECO:0007669"/>
    <property type="project" value="UniProtKB-KW"/>
</dbReference>
<dbReference type="GO" id="GO:0039694">
    <property type="term" value="P:viral RNA genome replication"/>
    <property type="evidence" value="ECO:0007669"/>
    <property type="project" value="InterPro"/>
</dbReference>
<dbReference type="GO" id="GO:0075523">
    <property type="term" value="P:viral translational frameshifting"/>
    <property type="evidence" value="ECO:0007669"/>
    <property type="project" value="UniProtKB-KW"/>
</dbReference>
<dbReference type="CDD" id="cd23172">
    <property type="entry name" value="ps-ssRNAv_Astroviridae_RdRp"/>
    <property type="match status" value="1"/>
</dbReference>
<dbReference type="Gene3D" id="3.30.70.270">
    <property type="match status" value="1"/>
</dbReference>
<dbReference type="Gene3D" id="2.40.10.10">
    <property type="entry name" value="Trypsin-like serine proteases"/>
    <property type="match status" value="2"/>
</dbReference>
<dbReference type="InterPro" id="IPR045835">
    <property type="entry name" value="Astro_1A"/>
</dbReference>
<dbReference type="InterPro" id="IPR045833">
    <property type="entry name" value="Astro_p19"/>
</dbReference>
<dbReference type="InterPro" id="IPR045836">
    <property type="entry name" value="Astro_VPg"/>
</dbReference>
<dbReference type="InterPro" id="IPR043502">
    <property type="entry name" value="DNA/RNA_pol_sf"/>
</dbReference>
<dbReference type="InterPro" id="IPR022068">
    <property type="entry name" value="Mamastrovirus_p20"/>
</dbReference>
<dbReference type="InterPro" id="IPR009003">
    <property type="entry name" value="Peptidase_S1_PA"/>
</dbReference>
<dbReference type="InterPro" id="IPR043504">
    <property type="entry name" value="Peptidase_S1_PA_chymotrypsin"/>
</dbReference>
<dbReference type="InterPro" id="IPR043128">
    <property type="entry name" value="Rev_trsase/Diguanyl_cyclase"/>
</dbReference>
<dbReference type="InterPro" id="IPR001205">
    <property type="entry name" value="RNA-dir_pol_C"/>
</dbReference>
<dbReference type="InterPro" id="IPR007094">
    <property type="entry name" value="RNA-dir_pol_PSvirus"/>
</dbReference>
<dbReference type="Pfam" id="PF19415">
    <property type="entry name" value="Astro_1A"/>
    <property type="match status" value="1"/>
</dbReference>
<dbReference type="Pfam" id="PF19414">
    <property type="entry name" value="Astro_p19"/>
    <property type="match status" value="1"/>
</dbReference>
<dbReference type="Pfam" id="PF19416">
    <property type="entry name" value="Astro_VPg"/>
    <property type="match status" value="1"/>
</dbReference>
<dbReference type="Pfam" id="PF12285">
    <property type="entry name" value="Astrovir_pp_1"/>
    <property type="match status" value="1"/>
</dbReference>
<dbReference type="Pfam" id="PF00680">
    <property type="entry name" value="RdRP_1"/>
    <property type="match status" value="1"/>
</dbReference>
<dbReference type="Pfam" id="PF13365">
    <property type="entry name" value="Trypsin_2"/>
    <property type="match status" value="1"/>
</dbReference>
<dbReference type="SUPFAM" id="SSF56672">
    <property type="entry name" value="DNA/RNA polymerases"/>
    <property type="match status" value="1"/>
</dbReference>
<dbReference type="SUPFAM" id="SSF50494">
    <property type="entry name" value="Trypsin-like serine proteases"/>
    <property type="match status" value="1"/>
</dbReference>
<dbReference type="PROSITE" id="PS50507">
    <property type="entry name" value="RDRP_SSRNA_POS"/>
    <property type="match status" value="1"/>
</dbReference>
<comment type="function">
    <molecule>Serine protease p27</molecule>
    <text evidence="2">Responsible for the cleavage of the polyprotein into functional products.</text>
</comment>
<comment type="function">
    <molecule>Viral genome-linked protein</molecule>
    <text evidence="3">Protein covalently attached to the 5' extremity of the genomic and subgenomic RNAs (By similarity). It may serve as a primer for the replicase (By similarity).</text>
</comment>
<comment type="catalytic activity">
    <reaction evidence="5">
        <text>RNA(n) + a ribonucleoside 5'-triphosphate = RNA(n+1) + diphosphate</text>
        <dbReference type="Rhea" id="RHEA:21248"/>
        <dbReference type="Rhea" id="RHEA-COMP:14527"/>
        <dbReference type="Rhea" id="RHEA-COMP:17342"/>
        <dbReference type="ChEBI" id="CHEBI:33019"/>
        <dbReference type="ChEBI" id="CHEBI:61557"/>
        <dbReference type="ChEBI" id="CHEBI:140395"/>
        <dbReference type="EC" id="2.7.7.48"/>
    </reaction>
</comment>
<comment type="subunit">
    <molecule>Serine protease p27</molecule>
    <text evidence="2">Monomer.</text>
</comment>
<comment type="subcellular location">
    <molecule>Transmembrane protein 1A</molecule>
    <subcellularLocation>
        <location evidence="7">Host membrane</location>
        <topology evidence="7">Multi-pass membrane protein</topology>
    </subcellularLocation>
</comment>
<comment type="alternative products">
    <event type="ribosomal frameshifting"/>
    <isoform>
        <id>Q4TWH8-1</id>
        <name>nsp1ab</name>
        <sequence type="displayed"/>
    </isoform>
    <isoform>
        <id>Q4TWH9-1</id>
        <name>nsp1a</name>
        <sequence type="external"/>
    </isoform>
</comment>
<comment type="PTM">
    <text evidence="2">Cleaved by the viral and host proteases (By similarity). The protease is probably autocatalytically cleaved (By similarity).</text>
</comment>
<comment type="miscellaneous">
    <molecule>Isoform nsp1ab</molecule>
    <text>Generated by a ribosomal frameshift at position 905.</text>
</comment>
<comment type="similarity">
    <text evidence="7">Belongs to the astroviridae polyprotein 1AB family.</text>
</comment>
<accession>Q4TWH8</accession>